<gene>
    <name evidence="1" type="primary">smpB</name>
    <name type="ordered locus">BQ04200</name>
</gene>
<evidence type="ECO:0000255" key="1">
    <source>
        <dbReference type="HAMAP-Rule" id="MF_00023"/>
    </source>
</evidence>
<protein>
    <recommendedName>
        <fullName evidence="1">SsrA-binding protein</fullName>
    </recommendedName>
    <alternativeName>
        <fullName evidence="1">Small protein B</fullName>
    </alternativeName>
</protein>
<feature type="chain" id="PRO_0000102909" description="SsrA-binding protein">
    <location>
        <begin position="1"/>
        <end position="158"/>
    </location>
</feature>
<sequence>MNKKRNAPVRKIIADNRKARFNFEILDNLEVGLVLQGAEVKSLRSNHANIAESYASFENGELWLVNSYIPEYTQANRFNHEPRRLRKLLISKREMARFFNATSREGMTLVPLKLYFNERGRAKLEIALARGKKLHDKRETEKKRDWRCEKARLLKRYG</sequence>
<keyword id="KW-0963">Cytoplasm</keyword>
<keyword id="KW-0694">RNA-binding</keyword>
<comment type="function">
    <text evidence="1">Required for rescue of stalled ribosomes mediated by trans-translation. Binds to transfer-messenger RNA (tmRNA), required for stable association of tmRNA with ribosomes. tmRNA and SmpB together mimic tRNA shape, replacing the anticodon stem-loop with SmpB. tmRNA is encoded by the ssrA gene; the 2 termini fold to resemble tRNA(Ala) and it encodes a 'tag peptide', a short internal open reading frame. During trans-translation Ala-aminoacylated tmRNA acts like a tRNA, entering the A-site of stalled ribosomes, displacing the stalled mRNA. The ribosome then switches to translate the ORF on the tmRNA; the nascent peptide is terminated with the 'tag peptide' encoded by the tmRNA and targeted for degradation. The ribosome is freed to recommence translation, which seems to be the essential function of trans-translation.</text>
</comment>
<comment type="subcellular location">
    <subcellularLocation>
        <location evidence="1">Cytoplasm</location>
    </subcellularLocation>
    <text evidence="1">The tmRNA-SmpB complex associates with stalled 70S ribosomes.</text>
</comment>
<comment type="similarity">
    <text evidence="1">Belongs to the SmpB family.</text>
</comment>
<reference key="1">
    <citation type="journal article" date="2004" name="Proc. Natl. Acad. Sci. U.S.A.">
        <title>The louse-borne human pathogen Bartonella quintana is a genomic derivative of the zoonotic agent Bartonella henselae.</title>
        <authorList>
            <person name="Alsmark U.C.M."/>
            <person name="Frank A.C."/>
            <person name="Karlberg E.O."/>
            <person name="Legault B.-A."/>
            <person name="Ardell D.H."/>
            <person name="Canbaeck B."/>
            <person name="Eriksson A.-S."/>
            <person name="Naeslund A.K."/>
            <person name="Handley S.A."/>
            <person name="Huvet M."/>
            <person name="La Scola B."/>
            <person name="Holmberg M."/>
            <person name="Andersson S.G.E."/>
        </authorList>
    </citation>
    <scope>NUCLEOTIDE SEQUENCE [LARGE SCALE GENOMIC DNA]</scope>
    <source>
        <strain>Toulouse</strain>
    </source>
</reference>
<accession>Q6G090</accession>
<dbReference type="EMBL" id="BX897700">
    <property type="protein sequence ID" value="CAF25919.1"/>
    <property type="molecule type" value="Genomic_DNA"/>
</dbReference>
<dbReference type="RefSeq" id="WP_011179208.1">
    <property type="nucleotide sequence ID" value="NC_005955.1"/>
</dbReference>
<dbReference type="SMR" id="Q6G090"/>
<dbReference type="KEGG" id="bqu:BQ04200"/>
<dbReference type="eggNOG" id="COG0691">
    <property type="taxonomic scope" value="Bacteria"/>
</dbReference>
<dbReference type="HOGENOM" id="CLU_108953_0_1_5"/>
<dbReference type="OrthoDB" id="9805462at2"/>
<dbReference type="Proteomes" id="UP000000597">
    <property type="component" value="Chromosome"/>
</dbReference>
<dbReference type="GO" id="GO:0005829">
    <property type="term" value="C:cytosol"/>
    <property type="evidence" value="ECO:0007669"/>
    <property type="project" value="TreeGrafter"/>
</dbReference>
<dbReference type="GO" id="GO:0003723">
    <property type="term" value="F:RNA binding"/>
    <property type="evidence" value="ECO:0007669"/>
    <property type="project" value="UniProtKB-UniRule"/>
</dbReference>
<dbReference type="GO" id="GO:0070929">
    <property type="term" value="P:trans-translation"/>
    <property type="evidence" value="ECO:0007669"/>
    <property type="project" value="UniProtKB-UniRule"/>
</dbReference>
<dbReference type="CDD" id="cd09294">
    <property type="entry name" value="SmpB"/>
    <property type="match status" value="1"/>
</dbReference>
<dbReference type="Gene3D" id="2.40.280.10">
    <property type="match status" value="1"/>
</dbReference>
<dbReference type="HAMAP" id="MF_00023">
    <property type="entry name" value="SmpB"/>
    <property type="match status" value="1"/>
</dbReference>
<dbReference type="InterPro" id="IPR023620">
    <property type="entry name" value="SmpB"/>
</dbReference>
<dbReference type="InterPro" id="IPR000037">
    <property type="entry name" value="SsrA-bd_prot"/>
</dbReference>
<dbReference type="NCBIfam" id="NF003843">
    <property type="entry name" value="PRK05422.1"/>
    <property type="match status" value="1"/>
</dbReference>
<dbReference type="NCBIfam" id="TIGR00086">
    <property type="entry name" value="smpB"/>
    <property type="match status" value="1"/>
</dbReference>
<dbReference type="PANTHER" id="PTHR30308:SF2">
    <property type="entry name" value="SSRA-BINDING PROTEIN"/>
    <property type="match status" value="1"/>
</dbReference>
<dbReference type="PANTHER" id="PTHR30308">
    <property type="entry name" value="TMRNA-BINDING COMPONENT OF TRANS-TRANSLATION TAGGING COMPLEX"/>
    <property type="match status" value="1"/>
</dbReference>
<dbReference type="Pfam" id="PF01668">
    <property type="entry name" value="SmpB"/>
    <property type="match status" value="1"/>
</dbReference>
<dbReference type="SUPFAM" id="SSF74982">
    <property type="entry name" value="Small protein B (SmpB)"/>
    <property type="match status" value="1"/>
</dbReference>
<organism>
    <name type="scientific">Bartonella quintana (strain Toulouse)</name>
    <name type="common">Rochalimaea quintana</name>
    <dbReference type="NCBI Taxonomy" id="283165"/>
    <lineage>
        <taxon>Bacteria</taxon>
        <taxon>Pseudomonadati</taxon>
        <taxon>Pseudomonadota</taxon>
        <taxon>Alphaproteobacteria</taxon>
        <taxon>Hyphomicrobiales</taxon>
        <taxon>Bartonellaceae</taxon>
        <taxon>Bartonella</taxon>
    </lineage>
</organism>
<name>SSRP_BARQU</name>
<proteinExistence type="inferred from homology"/>